<accession>A7FXM3</accession>
<proteinExistence type="inferred from homology"/>
<sequence>MANIKSAKKRIKVIETKTLRNKMLKSSLKTTIKNFLTVVEGKNVEEAKAAYKTAARALDMSVSKGIVHKNKAARTKSRLAAKLNALNA</sequence>
<comment type="function">
    <text evidence="1">Binds directly to 16S ribosomal RNA.</text>
</comment>
<comment type="similarity">
    <text evidence="1">Belongs to the bacterial ribosomal protein bS20 family.</text>
</comment>
<feature type="chain" id="PRO_1000014572" description="Small ribosomal subunit protein bS20">
    <location>
        <begin position="1"/>
        <end position="88"/>
    </location>
</feature>
<dbReference type="EMBL" id="CP000726">
    <property type="protein sequence ID" value="ABS32416.1"/>
    <property type="molecule type" value="Genomic_DNA"/>
</dbReference>
<dbReference type="RefSeq" id="WP_003358111.1">
    <property type="nucleotide sequence ID" value="NC_009697.1"/>
</dbReference>
<dbReference type="SMR" id="A7FXM3"/>
<dbReference type="GeneID" id="5187653"/>
<dbReference type="KEGG" id="cba:CLB_2931"/>
<dbReference type="HOGENOM" id="CLU_160655_0_0_9"/>
<dbReference type="GO" id="GO:0005829">
    <property type="term" value="C:cytosol"/>
    <property type="evidence" value="ECO:0007669"/>
    <property type="project" value="TreeGrafter"/>
</dbReference>
<dbReference type="GO" id="GO:0015935">
    <property type="term" value="C:small ribosomal subunit"/>
    <property type="evidence" value="ECO:0007669"/>
    <property type="project" value="TreeGrafter"/>
</dbReference>
<dbReference type="GO" id="GO:0070181">
    <property type="term" value="F:small ribosomal subunit rRNA binding"/>
    <property type="evidence" value="ECO:0007669"/>
    <property type="project" value="TreeGrafter"/>
</dbReference>
<dbReference type="GO" id="GO:0003735">
    <property type="term" value="F:structural constituent of ribosome"/>
    <property type="evidence" value="ECO:0007669"/>
    <property type="project" value="InterPro"/>
</dbReference>
<dbReference type="GO" id="GO:0006412">
    <property type="term" value="P:translation"/>
    <property type="evidence" value="ECO:0007669"/>
    <property type="project" value="UniProtKB-UniRule"/>
</dbReference>
<dbReference type="FunFam" id="1.20.58.110:FF:000001">
    <property type="entry name" value="30S ribosomal protein S20"/>
    <property type="match status" value="1"/>
</dbReference>
<dbReference type="Gene3D" id="1.20.58.110">
    <property type="entry name" value="Ribosomal protein S20"/>
    <property type="match status" value="1"/>
</dbReference>
<dbReference type="HAMAP" id="MF_00500">
    <property type="entry name" value="Ribosomal_bS20"/>
    <property type="match status" value="1"/>
</dbReference>
<dbReference type="InterPro" id="IPR002583">
    <property type="entry name" value="Ribosomal_bS20"/>
</dbReference>
<dbReference type="InterPro" id="IPR036510">
    <property type="entry name" value="Ribosomal_bS20_sf"/>
</dbReference>
<dbReference type="NCBIfam" id="TIGR00029">
    <property type="entry name" value="S20"/>
    <property type="match status" value="1"/>
</dbReference>
<dbReference type="PANTHER" id="PTHR33398">
    <property type="entry name" value="30S RIBOSOMAL PROTEIN S20"/>
    <property type="match status" value="1"/>
</dbReference>
<dbReference type="PANTHER" id="PTHR33398:SF1">
    <property type="entry name" value="SMALL RIBOSOMAL SUBUNIT PROTEIN BS20C"/>
    <property type="match status" value="1"/>
</dbReference>
<dbReference type="Pfam" id="PF01649">
    <property type="entry name" value="Ribosomal_S20p"/>
    <property type="match status" value="1"/>
</dbReference>
<dbReference type="SUPFAM" id="SSF46992">
    <property type="entry name" value="Ribosomal protein S20"/>
    <property type="match status" value="1"/>
</dbReference>
<gene>
    <name evidence="1" type="primary">rpsT</name>
    <name type="ordered locus">CLB_2931</name>
</gene>
<protein>
    <recommendedName>
        <fullName evidence="1">Small ribosomal subunit protein bS20</fullName>
    </recommendedName>
    <alternativeName>
        <fullName evidence="2">30S ribosomal protein S20</fullName>
    </alternativeName>
</protein>
<organism>
    <name type="scientific">Clostridium botulinum (strain ATCC 19397 / Type A)</name>
    <dbReference type="NCBI Taxonomy" id="441770"/>
    <lineage>
        <taxon>Bacteria</taxon>
        <taxon>Bacillati</taxon>
        <taxon>Bacillota</taxon>
        <taxon>Clostridia</taxon>
        <taxon>Eubacteriales</taxon>
        <taxon>Clostridiaceae</taxon>
        <taxon>Clostridium</taxon>
    </lineage>
</organism>
<keyword id="KW-0687">Ribonucleoprotein</keyword>
<keyword id="KW-0689">Ribosomal protein</keyword>
<keyword id="KW-0694">RNA-binding</keyword>
<keyword id="KW-0699">rRNA-binding</keyword>
<reference key="1">
    <citation type="journal article" date="2007" name="PLoS ONE">
        <title>Analysis of the neurotoxin complex genes in Clostridium botulinum A1-A4 and B1 strains: BoNT/A3, /Ba4 and /B1 clusters are located within plasmids.</title>
        <authorList>
            <person name="Smith T.J."/>
            <person name="Hill K.K."/>
            <person name="Foley B.T."/>
            <person name="Detter J.C."/>
            <person name="Munk A.C."/>
            <person name="Bruce D.C."/>
            <person name="Doggett N.A."/>
            <person name="Smith L.A."/>
            <person name="Marks J.D."/>
            <person name="Xie G."/>
            <person name="Brettin T.S."/>
        </authorList>
    </citation>
    <scope>NUCLEOTIDE SEQUENCE [LARGE SCALE GENOMIC DNA]</scope>
    <source>
        <strain>ATCC 19397 / Type A</strain>
    </source>
</reference>
<evidence type="ECO:0000255" key="1">
    <source>
        <dbReference type="HAMAP-Rule" id="MF_00500"/>
    </source>
</evidence>
<evidence type="ECO:0000305" key="2"/>
<name>RS20_CLOB1</name>